<name>RIMP_AGARV</name>
<feature type="chain" id="PRO_1000213491" description="Ribosome maturation factor RimP">
    <location>
        <begin position="1"/>
        <end position="155"/>
    </location>
</feature>
<sequence length="155" mass="17885">MSKASVYEAKTESFIQPILDSMNFELVDVEYVKEGGMNYLRAYIDKEGGITVDDCEVVARQMNEILDREDYIPDSYTFEVSSPGLGRPLKKEKDYVRNMNKEIEIRTYRAINKSKEFYGLLKAYDKDTVTITDEDGNETTFNKSDIALIRQALDF</sequence>
<reference key="1">
    <citation type="journal article" date="2009" name="Proc. Natl. Acad. Sci. U.S.A.">
        <title>Characterizing a model human gut microbiota composed of members of its two dominant bacterial phyla.</title>
        <authorList>
            <person name="Mahowald M.A."/>
            <person name="Rey F.E."/>
            <person name="Seedorf H."/>
            <person name="Turnbaugh P.J."/>
            <person name="Fulton R.S."/>
            <person name="Wollam A."/>
            <person name="Shah N."/>
            <person name="Wang C."/>
            <person name="Magrini V."/>
            <person name="Wilson R.K."/>
            <person name="Cantarel B.L."/>
            <person name="Coutinho P.M."/>
            <person name="Henrissat B."/>
            <person name="Crock L.W."/>
            <person name="Russell A."/>
            <person name="Verberkmoes N.C."/>
            <person name="Hettich R.L."/>
            <person name="Gordon J.I."/>
        </authorList>
    </citation>
    <scope>NUCLEOTIDE SEQUENCE [LARGE SCALE GENOMIC DNA]</scope>
    <source>
        <strain>ATCC 33656 / DSM 3377 / JCM 17463 / KCTC 5835 / LMG 30912 / VPI 0990</strain>
    </source>
</reference>
<keyword id="KW-0963">Cytoplasm</keyword>
<keyword id="KW-0690">Ribosome biogenesis</keyword>
<organism>
    <name type="scientific">Agathobacter rectalis (strain ATCC 33656 / DSM 3377 / JCM 17463 / KCTC 5835 / VPI 0990)</name>
    <name type="common">Eubacterium rectale</name>
    <dbReference type="NCBI Taxonomy" id="515619"/>
    <lineage>
        <taxon>Bacteria</taxon>
        <taxon>Bacillati</taxon>
        <taxon>Bacillota</taxon>
        <taxon>Clostridia</taxon>
        <taxon>Lachnospirales</taxon>
        <taxon>Lachnospiraceae</taxon>
        <taxon>Agathobacter</taxon>
    </lineage>
</organism>
<protein>
    <recommendedName>
        <fullName evidence="1">Ribosome maturation factor RimP</fullName>
    </recommendedName>
</protein>
<dbReference type="EMBL" id="CP001107">
    <property type="protein sequence ID" value="ACR75690.1"/>
    <property type="molecule type" value="Genomic_DNA"/>
</dbReference>
<dbReference type="RefSeq" id="WP_012742787.1">
    <property type="nucleotide sequence ID" value="NC_012781.1"/>
</dbReference>
<dbReference type="SMR" id="C4ZBF8"/>
<dbReference type="STRING" id="515619.EUBREC_1947"/>
<dbReference type="PaxDb" id="515619-EUBREC_1947"/>
<dbReference type="GeneID" id="86988738"/>
<dbReference type="KEGG" id="ere:EUBREC_1947"/>
<dbReference type="HOGENOM" id="CLU_070525_2_0_9"/>
<dbReference type="Proteomes" id="UP000001477">
    <property type="component" value="Chromosome"/>
</dbReference>
<dbReference type="GO" id="GO:0005829">
    <property type="term" value="C:cytosol"/>
    <property type="evidence" value="ECO:0007669"/>
    <property type="project" value="TreeGrafter"/>
</dbReference>
<dbReference type="GO" id="GO:0000028">
    <property type="term" value="P:ribosomal small subunit assembly"/>
    <property type="evidence" value="ECO:0007669"/>
    <property type="project" value="TreeGrafter"/>
</dbReference>
<dbReference type="GO" id="GO:0006412">
    <property type="term" value="P:translation"/>
    <property type="evidence" value="ECO:0007669"/>
    <property type="project" value="TreeGrafter"/>
</dbReference>
<dbReference type="CDD" id="cd01734">
    <property type="entry name" value="YlxS_C"/>
    <property type="match status" value="1"/>
</dbReference>
<dbReference type="FunFam" id="3.30.300.70:FF:000001">
    <property type="entry name" value="Ribosome maturation factor RimP"/>
    <property type="match status" value="1"/>
</dbReference>
<dbReference type="Gene3D" id="2.30.30.180">
    <property type="entry name" value="Ribosome maturation factor RimP, C-terminal domain"/>
    <property type="match status" value="1"/>
</dbReference>
<dbReference type="Gene3D" id="3.30.300.70">
    <property type="entry name" value="RimP-like superfamily, N-terminal"/>
    <property type="match status" value="1"/>
</dbReference>
<dbReference type="HAMAP" id="MF_01077">
    <property type="entry name" value="RimP"/>
    <property type="match status" value="1"/>
</dbReference>
<dbReference type="InterPro" id="IPR003728">
    <property type="entry name" value="Ribosome_maturation_RimP"/>
</dbReference>
<dbReference type="InterPro" id="IPR028998">
    <property type="entry name" value="RimP_C"/>
</dbReference>
<dbReference type="InterPro" id="IPR036847">
    <property type="entry name" value="RimP_C_sf"/>
</dbReference>
<dbReference type="InterPro" id="IPR028989">
    <property type="entry name" value="RimP_N"/>
</dbReference>
<dbReference type="InterPro" id="IPR035956">
    <property type="entry name" value="RimP_N_sf"/>
</dbReference>
<dbReference type="PANTHER" id="PTHR33867">
    <property type="entry name" value="RIBOSOME MATURATION FACTOR RIMP"/>
    <property type="match status" value="1"/>
</dbReference>
<dbReference type="PANTHER" id="PTHR33867:SF1">
    <property type="entry name" value="RIBOSOME MATURATION FACTOR RIMP"/>
    <property type="match status" value="1"/>
</dbReference>
<dbReference type="Pfam" id="PF17384">
    <property type="entry name" value="DUF150_C"/>
    <property type="match status" value="1"/>
</dbReference>
<dbReference type="Pfam" id="PF02576">
    <property type="entry name" value="RimP_N"/>
    <property type="match status" value="1"/>
</dbReference>
<dbReference type="SUPFAM" id="SSF74942">
    <property type="entry name" value="YhbC-like, C-terminal domain"/>
    <property type="match status" value="1"/>
</dbReference>
<dbReference type="SUPFAM" id="SSF75420">
    <property type="entry name" value="YhbC-like, N-terminal domain"/>
    <property type="match status" value="1"/>
</dbReference>
<evidence type="ECO:0000255" key="1">
    <source>
        <dbReference type="HAMAP-Rule" id="MF_01077"/>
    </source>
</evidence>
<gene>
    <name evidence="1" type="primary">rimP</name>
    <name type="ordered locus">EUBREC_1947</name>
</gene>
<comment type="function">
    <text evidence="1">Required for maturation of 30S ribosomal subunits.</text>
</comment>
<comment type="subcellular location">
    <subcellularLocation>
        <location evidence="1">Cytoplasm</location>
    </subcellularLocation>
</comment>
<comment type="similarity">
    <text evidence="1">Belongs to the RimP family.</text>
</comment>
<proteinExistence type="inferred from homology"/>
<accession>C4ZBF8</accession>